<protein>
    <recommendedName>
        <fullName evidence="3">ADP-ribosylhydrolase ARH3</fullName>
    </recommendedName>
    <alternativeName>
        <fullName evidence="3">ADP-ribose glycohydrolase ARH3</fullName>
    </alternativeName>
    <alternativeName>
        <fullName evidence="1">ADP-ribosylhydrolase 3</fullName>
    </alternativeName>
    <alternativeName>
        <fullName evidence="3">O-acetyl-ADP-ribose deacetylase ARH3</fullName>
        <ecNumber evidence="1">3.5.1.-</ecNumber>
    </alternativeName>
    <alternativeName>
        <fullName evidence="3">Poly(ADP-ribose) glycohydrolase ARH3</fullName>
        <ecNumber evidence="1">3.2.1.143</ecNumber>
    </alternativeName>
    <alternativeName>
        <fullName evidence="3">[Protein ADP-ribosylarginine] hydrolase-like protein 2</fullName>
    </alternativeName>
    <alternativeName>
        <fullName>[Protein ADP-ribosylserine] hydrolase</fullName>
        <ecNumber>3.2.2.-</ecNumber>
    </alternativeName>
</protein>
<gene>
    <name type="primary">adprs</name>
    <name evidence="1" type="synonym">adprhl2</name>
    <name evidence="1" type="synonym">arh3</name>
    <name evidence="2" type="ORF">TGas084j22.1</name>
</gene>
<reference key="1">
    <citation type="submission" date="2006-10" db="EMBL/GenBank/DDBJ databases">
        <authorList>
            <consortium name="Sanger Xenopus tropicalis EST/cDNA project"/>
        </authorList>
    </citation>
    <scope>NUCLEOTIDE SEQUENCE [LARGE SCALE MRNA]</scope>
    <source>
        <tissue>Gastrula</tissue>
    </source>
</reference>
<feature type="chain" id="PRO_0000277617" description="ADP-ribosylhydrolase ARH3">
    <location>
        <begin position="1"/>
        <end position="350"/>
    </location>
</feature>
<feature type="binding site" evidence="1">
    <location>
        <position position="27"/>
    </location>
    <ligand>
        <name>Mg(2+)</name>
        <dbReference type="ChEBI" id="CHEBI:18420"/>
        <label>2</label>
    </ligand>
</feature>
<feature type="binding site" evidence="1">
    <location>
        <position position="57"/>
    </location>
    <ligand>
        <name>Mg(2+)</name>
        <dbReference type="ChEBI" id="CHEBI:18420"/>
        <label>1</label>
    </ligand>
</feature>
<feature type="binding site" evidence="1">
    <location>
        <position position="58"/>
    </location>
    <ligand>
        <name>Mg(2+)</name>
        <dbReference type="ChEBI" id="CHEBI:18420"/>
        <label>1</label>
    </ligand>
</feature>
<feature type="binding site" evidence="1">
    <location>
        <position position="58"/>
    </location>
    <ligand>
        <name>substrate</name>
    </ligand>
</feature>
<feature type="binding site" evidence="1">
    <location>
        <position position="59"/>
    </location>
    <ligand>
        <name>Mg(2+)</name>
        <dbReference type="ChEBI" id="CHEBI:18420"/>
        <label>1</label>
    </ligand>
</feature>
<feature type="binding site" evidence="1">
    <location>
        <begin position="127"/>
        <end position="133"/>
    </location>
    <ligand>
        <name>substrate</name>
    </ligand>
</feature>
<feature type="binding site" evidence="1">
    <location>
        <position position="163"/>
    </location>
    <ligand>
        <name>substrate</name>
    </ligand>
</feature>
<feature type="binding site" evidence="1">
    <location>
        <position position="216"/>
    </location>
    <ligand>
        <name>substrate</name>
    </ligand>
</feature>
<feature type="binding site" evidence="1">
    <location>
        <position position="252"/>
    </location>
    <ligand>
        <name>substrate</name>
    </ligand>
</feature>
<feature type="binding site" evidence="1">
    <location>
        <position position="295"/>
    </location>
    <ligand>
        <name>Mg(2+)</name>
        <dbReference type="ChEBI" id="CHEBI:18420"/>
        <label>2</label>
    </ligand>
</feature>
<feature type="binding site" evidence="1">
    <location>
        <position position="297"/>
    </location>
    <ligand>
        <name>Mg(2+)</name>
        <dbReference type="ChEBI" id="CHEBI:18420"/>
        <label>1</label>
    </ligand>
</feature>
<feature type="binding site" evidence="1">
    <location>
        <position position="297"/>
    </location>
    <ligand>
        <name>Mg(2+)</name>
        <dbReference type="ChEBI" id="CHEBI:18420"/>
        <label>2</label>
    </ligand>
</feature>
<feature type="binding site" evidence="1">
    <location>
        <position position="298"/>
    </location>
    <ligand>
        <name>Mg(2+)</name>
        <dbReference type="ChEBI" id="CHEBI:18420"/>
        <label>2</label>
    </ligand>
</feature>
<feature type="site" description="Glutamate flap" evidence="1">
    <location>
        <position position="27"/>
    </location>
</feature>
<organism>
    <name type="scientific">Xenopus tropicalis</name>
    <name type="common">Western clawed frog</name>
    <name type="synonym">Silurana tropicalis</name>
    <dbReference type="NCBI Taxonomy" id="8364"/>
    <lineage>
        <taxon>Eukaryota</taxon>
        <taxon>Metazoa</taxon>
        <taxon>Chordata</taxon>
        <taxon>Craniata</taxon>
        <taxon>Vertebrata</taxon>
        <taxon>Euteleostomi</taxon>
        <taxon>Amphibia</taxon>
        <taxon>Batrachia</taxon>
        <taxon>Anura</taxon>
        <taxon>Pipoidea</taxon>
        <taxon>Pipidae</taxon>
        <taxon>Xenopodinae</taxon>
        <taxon>Xenopus</taxon>
        <taxon>Silurana</taxon>
    </lineage>
</organism>
<accession>Q28FQ6</accession>
<comment type="function">
    <text evidence="1">ADP-ribosylhydrolase that preferentially hydrolyzes the scissile alpha-O-linkage attached to the anomeric C1'' position of ADP-ribose and acts on different substrates, such as proteins ADP-ribosylated on serine and threonine, free poly(ADP-ribose) and O-acetyl-ADP-D-ribose. Specifically acts as a serine mono-ADP-ribosylhydrolase by mediating the removal of mono-ADP-ribose attached to serine residues on proteins, thereby playing a key role in DNA damage response. Serine ADP-ribosylation of proteins constitutes the primary form of ADP-ribosylation of proteins in response to DNA damage. Does not hydrolyze ADP-ribosyl-arginine, -cysteine, -diphthamide, or -asparagine bonds. Also able to degrade protein free poly(ADP-ribose), which is synthesized in response to DNA damage: free poly(ADP-ribose) acts as a potent cell death signal and its degradation by ADPRHL2 protects cells from poly(ADP-ribose)-dependent cell death, a process named parthanatos (By similarity). Also hydrolyzes free poly(ADP-ribose) in mitochondria. Specifically digests O-acetyl-ADP-D-ribose, a product of deacetylation reactions catalyzed by sirtuins. Specifically degrades 1''-O-acetyl-ADP-D-ribose isomer, rather than 2''-O-acetyl-ADP-D-ribose or 3''-O-acetyl-ADP-D-ribose isomers.</text>
</comment>
<comment type="catalytic activity">
    <reaction evidence="1">
        <text>[(1''-&gt;2')-ADP-alpha-D-ribose](n) + H2O = [(1''-&gt;2')-ADP-alpha-D-ribose](n-1) + ADP-D-ribose</text>
        <dbReference type="Rhea" id="RHEA:52216"/>
        <dbReference type="Rhea" id="RHEA-COMP:16922"/>
        <dbReference type="Rhea" id="RHEA-COMP:16923"/>
        <dbReference type="ChEBI" id="CHEBI:15377"/>
        <dbReference type="ChEBI" id="CHEBI:57967"/>
        <dbReference type="ChEBI" id="CHEBI:142512"/>
        <dbReference type="EC" id="3.2.1.143"/>
    </reaction>
</comment>
<comment type="catalytic activity">
    <reaction evidence="1">
        <text>1''-O-acetyl-ADP-alpha-D-ribose + H2O = ADP-D-ribose + acetate + H(+)</text>
        <dbReference type="Rhea" id="RHEA:58112"/>
        <dbReference type="ChEBI" id="CHEBI:15377"/>
        <dbReference type="ChEBI" id="CHEBI:15378"/>
        <dbReference type="ChEBI" id="CHEBI:30089"/>
        <dbReference type="ChEBI" id="CHEBI:57967"/>
        <dbReference type="ChEBI" id="CHEBI:142511"/>
    </reaction>
</comment>
<comment type="catalytic activity">
    <reaction evidence="1">
        <text>O-(ADP-D-ribosyl)-L-seryl-[protein] + H2O = ADP-D-ribose + L-seryl-[protein]</text>
        <dbReference type="Rhea" id="RHEA:58256"/>
        <dbReference type="Rhea" id="RHEA-COMP:9863"/>
        <dbReference type="Rhea" id="RHEA-COMP:15091"/>
        <dbReference type="ChEBI" id="CHEBI:15377"/>
        <dbReference type="ChEBI" id="CHEBI:29999"/>
        <dbReference type="ChEBI" id="CHEBI:57967"/>
        <dbReference type="ChEBI" id="CHEBI:142556"/>
    </reaction>
</comment>
<comment type="catalytic activity">
    <reaction evidence="1">
        <text>alpha-NAD(+) + H2O = ADP-D-ribose + nicotinamide + H(+)</text>
        <dbReference type="Rhea" id="RHEA:68792"/>
        <dbReference type="ChEBI" id="CHEBI:15377"/>
        <dbReference type="ChEBI" id="CHEBI:15378"/>
        <dbReference type="ChEBI" id="CHEBI:17154"/>
        <dbReference type="ChEBI" id="CHEBI:57967"/>
        <dbReference type="ChEBI" id="CHEBI:77017"/>
    </reaction>
</comment>
<comment type="cofactor">
    <cofactor evidence="1">
        <name>Mg(2+)</name>
        <dbReference type="ChEBI" id="CHEBI:18420"/>
    </cofactor>
    <text evidence="1">Binds 2 magnesium ions per subunit.</text>
</comment>
<comment type="activity regulation">
    <text evidence="1">The protein undergoes a dramatic conformational switch from closed to open states upon substrate-binding, which enables specific substrate recognition for the 1''-O-linkage. The glutamate flap (Glu-27) blocks substrate entrance to Mg(2+) in the unliganded closed state. In presence of substrate, Glu-27 is ejected from the active site: this closed-to-open transition significantly widens the substrate-binding channel and precisely positions the scissile 1''-O-linkage for cleavage while securing tightly 2'- and 3'-hydroxyls of ADP-ribose.</text>
</comment>
<comment type="subunit">
    <text evidence="1">Monomer.</text>
</comment>
<comment type="subcellular location">
    <subcellularLocation>
        <location evidence="1">Nucleus</location>
    </subcellularLocation>
    <subcellularLocation>
        <location evidence="1">Cytoplasm</location>
    </subcellularLocation>
    <subcellularLocation>
        <location evidence="1">Chromosome</location>
    </subcellularLocation>
    <subcellularLocation>
        <location evidence="1">Mitochondrion matrix</location>
    </subcellularLocation>
    <text evidence="1">Recruited to DNA lesion regions following DNA damage; ADP-D-ribose-recognition is required for recruitment to DNA damage sites.</text>
</comment>
<comment type="similarity">
    <text evidence="3">Belongs to the ADP-ribosylglycohydrolase family.</text>
</comment>
<dbReference type="EC" id="3.5.1.-" evidence="1"/>
<dbReference type="EC" id="3.2.1.143" evidence="1"/>
<dbReference type="EC" id="3.2.2.-"/>
<dbReference type="EMBL" id="CR761827">
    <property type="protein sequence ID" value="CAJ81573.1"/>
    <property type="molecule type" value="mRNA"/>
</dbReference>
<dbReference type="RefSeq" id="NP_001016184.1">
    <property type="nucleotide sequence ID" value="NM_001016184.2"/>
</dbReference>
<dbReference type="SMR" id="Q28FQ6"/>
<dbReference type="FunCoup" id="Q28FQ6">
    <property type="interactions" value="3136"/>
</dbReference>
<dbReference type="STRING" id="8364.ENSXETP00000005540"/>
<dbReference type="PaxDb" id="8364-ENSXETP00000059133"/>
<dbReference type="GeneID" id="548938"/>
<dbReference type="KEGG" id="xtr:548938"/>
<dbReference type="AGR" id="Xenbase:XB-GENE-944445"/>
<dbReference type="CTD" id="54936"/>
<dbReference type="Xenbase" id="XB-GENE-944445">
    <property type="gene designation" value="adprs"/>
</dbReference>
<dbReference type="eggNOG" id="ENOG502QUER">
    <property type="taxonomic scope" value="Eukaryota"/>
</dbReference>
<dbReference type="InParanoid" id="Q28FQ6"/>
<dbReference type="OrthoDB" id="410104at2759"/>
<dbReference type="Reactome" id="R-XTR-110362">
    <property type="pathway name" value="POLB-Dependent Long Patch Base Excision Repair"/>
</dbReference>
<dbReference type="Proteomes" id="UP000008143">
    <property type="component" value="Chromosome 2"/>
</dbReference>
<dbReference type="GO" id="GO:0005759">
    <property type="term" value="C:mitochondrial matrix"/>
    <property type="evidence" value="ECO:0007669"/>
    <property type="project" value="UniProtKB-SubCell"/>
</dbReference>
<dbReference type="GO" id="GO:0005634">
    <property type="term" value="C:nucleus"/>
    <property type="evidence" value="ECO:0000250"/>
    <property type="project" value="UniProtKB"/>
</dbReference>
<dbReference type="GO" id="GO:0090734">
    <property type="term" value="C:site of DNA damage"/>
    <property type="evidence" value="ECO:0000250"/>
    <property type="project" value="UniProtKB"/>
</dbReference>
<dbReference type="GO" id="GO:0140292">
    <property type="term" value="F:ADP-ribosylserine hydrolase activity"/>
    <property type="evidence" value="ECO:0000250"/>
    <property type="project" value="UniProtKB"/>
</dbReference>
<dbReference type="GO" id="GO:0004553">
    <property type="term" value="F:hydrolase activity, hydrolyzing O-glycosyl compounds"/>
    <property type="evidence" value="ECO:0000250"/>
    <property type="project" value="UniProtKB"/>
</dbReference>
<dbReference type="GO" id="GO:0000287">
    <property type="term" value="F:magnesium ion binding"/>
    <property type="evidence" value="ECO:0000250"/>
    <property type="project" value="UniProtKB"/>
</dbReference>
<dbReference type="GO" id="GO:0061463">
    <property type="term" value="F:O-acetyl-ADP-ribose deacetylase activity"/>
    <property type="evidence" value="ECO:0000250"/>
    <property type="project" value="UniProtKB"/>
</dbReference>
<dbReference type="GO" id="GO:0004649">
    <property type="term" value="F:poly(ADP-ribose) glycohydrolase activity"/>
    <property type="evidence" value="ECO:0000250"/>
    <property type="project" value="UniProtKB"/>
</dbReference>
<dbReference type="GO" id="GO:0006281">
    <property type="term" value="P:DNA repair"/>
    <property type="evidence" value="ECO:0000250"/>
    <property type="project" value="UniProtKB"/>
</dbReference>
<dbReference type="GO" id="GO:0060546">
    <property type="term" value="P:negative regulation of necroptotic process"/>
    <property type="evidence" value="ECO:0000250"/>
    <property type="project" value="UniProtKB"/>
</dbReference>
<dbReference type="GO" id="GO:0140290">
    <property type="term" value="P:peptidyl-serine ADP-deribosylation"/>
    <property type="evidence" value="ECO:0000250"/>
    <property type="project" value="UniProtKB"/>
</dbReference>
<dbReference type="FunFam" id="1.10.4080.10:FF:000001">
    <property type="entry name" value="ADP-ribose glycohydrolase ARH3"/>
    <property type="match status" value="1"/>
</dbReference>
<dbReference type="Gene3D" id="1.10.4080.10">
    <property type="entry name" value="ADP-ribosylation/Crystallin J1"/>
    <property type="match status" value="1"/>
</dbReference>
<dbReference type="InterPro" id="IPR050792">
    <property type="entry name" value="ADP-ribosylglycohydrolase"/>
</dbReference>
<dbReference type="InterPro" id="IPR005502">
    <property type="entry name" value="Ribosyl_crysJ1"/>
</dbReference>
<dbReference type="InterPro" id="IPR036705">
    <property type="entry name" value="Ribosyl_crysJ1_sf"/>
</dbReference>
<dbReference type="PANTHER" id="PTHR16222">
    <property type="entry name" value="ADP-RIBOSYLGLYCOHYDROLASE"/>
    <property type="match status" value="1"/>
</dbReference>
<dbReference type="PANTHER" id="PTHR16222:SF24">
    <property type="entry name" value="ADP-RIBOSYLHYDROLASE ARH3"/>
    <property type="match status" value="1"/>
</dbReference>
<dbReference type="Pfam" id="PF03747">
    <property type="entry name" value="ADP_ribosyl_GH"/>
    <property type="match status" value="1"/>
</dbReference>
<dbReference type="SUPFAM" id="SSF101478">
    <property type="entry name" value="ADP-ribosylglycohydrolase"/>
    <property type="match status" value="1"/>
</dbReference>
<sequence length="350" mass="39034">MMAAGVSRFRGSLLGALLGDCIGAVFEGHTNVTKEFLFDYMKSLDKGERLKRVLTYTDDTAMARSIVQSVLENYEFNIEDLANRFTTEYNRDPDRGYGMAVVHVFEKLGSGEYKHVFSPAREQFDGKGSYGNGAAMRVVGISLAYPRIPDIIEYARTSGMLTHASSLGYNGAILQALAVHYALQGELAPETFLDQLLDHMKEVETDKKSRSDALELEMDEFPYCNKLRKIKAFLAREDVTRKDIVKELGNGIQAFESVPTAIYSFLRCLKPVSELPSELTNLQRTIAFCILLGGDTDTIATMAAAIAGAYHGEEQIPLNWKLSAEGYKDAEDWGEKLHQLYCRRLQSTTS</sequence>
<proteinExistence type="evidence at transcript level"/>
<keyword id="KW-0158">Chromosome</keyword>
<keyword id="KW-0963">Cytoplasm</keyword>
<keyword id="KW-0227">DNA damage</keyword>
<keyword id="KW-0234">DNA repair</keyword>
<keyword id="KW-0378">Hydrolase</keyword>
<keyword id="KW-0460">Magnesium</keyword>
<keyword id="KW-0479">Metal-binding</keyword>
<keyword id="KW-0496">Mitochondrion</keyword>
<keyword id="KW-0539">Nucleus</keyword>
<keyword id="KW-1185">Reference proteome</keyword>
<evidence type="ECO:0000250" key="1">
    <source>
        <dbReference type="UniProtKB" id="Q9NX46"/>
    </source>
</evidence>
<evidence type="ECO:0000303" key="2">
    <source ref="1"/>
</evidence>
<evidence type="ECO:0000305" key="3"/>
<name>ADPRS_XENTR</name>